<reference key="1">
    <citation type="journal article" date="2004" name="Nat. Biotechnol.">
        <title>Complete sequence and comparative genome analysis of the dairy bacterium Streptococcus thermophilus.</title>
        <authorList>
            <person name="Bolotin A."/>
            <person name="Quinquis B."/>
            <person name="Renault P."/>
            <person name="Sorokin A."/>
            <person name="Ehrlich S.D."/>
            <person name="Kulakauskas S."/>
            <person name="Lapidus A."/>
            <person name="Goltsman E."/>
            <person name="Mazur M."/>
            <person name="Pusch G.D."/>
            <person name="Fonstein M."/>
            <person name="Overbeek R."/>
            <person name="Kyprides N."/>
            <person name="Purnelle B."/>
            <person name="Prozzi D."/>
            <person name="Ngui K."/>
            <person name="Masuy D."/>
            <person name="Hancy F."/>
            <person name="Burteau S."/>
            <person name="Boutry M."/>
            <person name="Delcour J."/>
            <person name="Goffeau A."/>
            <person name="Hols P."/>
        </authorList>
    </citation>
    <scope>NUCLEOTIDE SEQUENCE [LARGE SCALE GENOMIC DNA]</scope>
    <source>
        <strain>ATCC BAA-250 / LMG 18311</strain>
    </source>
</reference>
<sequence length="610" mass="68282">MPNIEELKQRQEKIRNFSIIAHIDHGKSTLADRILEKTETVSSREMQAQLLDSMDLERERGITIKLNAIELNYKAKDGETYIFHLIDTPGHVDFTYEVSRSLAACEGAILVVDAAQGIEAQTLANVYLALDNDLEILPVINKIDLPAADPERVRTEIEDVIGLDASEAVLASAKAGIGIEEILEQIVEKVPAPQGDVEAPLQALIFDSVYDAYRGVILQVRVVNGMVKTGDKIQMMSNGKTFDVTEVGIFTPKAVGRDYLATGDVGYVAASIKTVADTRVGDTVTLADNPAAEPLHGYKQMNPMVFAGLYPIESNKYNDLREALEKLQLNDASLQFEPETSQALGFGFRCGFLGLLHMDVIQERLEREFNIDLIMTAPSVVYHVNTTDGEMLEVSNPSEFPDPTRIDTIEEPYVKAQIMVPQEYVGAVMELAQRKRGDFETMEYIDDNRVNVIYQIPLAEIVFDFFDKLKSSTRGYASFDYELSEYRRSQLVKMDILLNGDKVDALSFIVHREFAYERGKLIVDKLKKIIPRQQFEVPIQAAIGQKIVARTDIKALRKNVLAKCYGGDVSRKRKLLEKQKAGKKRMKAIGSVEVPQEAFLSVLSMDEDEK</sequence>
<gene>
    <name evidence="1" type="primary">lepA</name>
    <name type="ordered locus">stu0911</name>
</gene>
<name>LEPA_STRT2</name>
<evidence type="ECO:0000255" key="1">
    <source>
        <dbReference type="HAMAP-Rule" id="MF_00071"/>
    </source>
</evidence>
<protein>
    <recommendedName>
        <fullName evidence="1">Elongation factor 4</fullName>
        <shortName evidence="1">EF-4</shortName>
        <ecNumber evidence="1">3.6.5.n1</ecNumber>
    </recommendedName>
    <alternativeName>
        <fullName evidence="1">Ribosomal back-translocase LepA</fullName>
    </alternativeName>
</protein>
<accession>Q5M4M2</accession>
<feature type="chain" id="PRO_0000224802" description="Elongation factor 4">
    <location>
        <begin position="1"/>
        <end position="610"/>
    </location>
</feature>
<feature type="domain" description="tr-type G">
    <location>
        <begin position="12"/>
        <end position="194"/>
    </location>
</feature>
<feature type="binding site" evidence="1">
    <location>
        <begin position="24"/>
        <end position="29"/>
    </location>
    <ligand>
        <name>GTP</name>
        <dbReference type="ChEBI" id="CHEBI:37565"/>
    </ligand>
</feature>
<feature type="binding site" evidence="1">
    <location>
        <begin position="141"/>
        <end position="144"/>
    </location>
    <ligand>
        <name>GTP</name>
        <dbReference type="ChEBI" id="CHEBI:37565"/>
    </ligand>
</feature>
<organism>
    <name type="scientific">Streptococcus thermophilus (strain ATCC BAA-250 / LMG 18311)</name>
    <dbReference type="NCBI Taxonomy" id="264199"/>
    <lineage>
        <taxon>Bacteria</taxon>
        <taxon>Bacillati</taxon>
        <taxon>Bacillota</taxon>
        <taxon>Bacilli</taxon>
        <taxon>Lactobacillales</taxon>
        <taxon>Streptococcaceae</taxon>
        <taxon>Streptococcus</taxon>
    </lineage>
</organism>
<comment type="function">
    <text evidence="1">Required for accurate and efficient protein synthesis under certain stress conditions. May act as a fidelity factor of the translation reaction, by catalyzing a one-codon backward translocation of tRNAs on improperly translocated ribosomes. Back-translocation proceeds from a post-translocation (POST) complex to a pre-translocation (PRE) complex, thus giving elongation factor G a second chance to translocate the tRNAs correctly. Binds to ribosomes in a GTP-dependent manner.</text>
</comment>
<comment type="catalytic activity">
    <reaction evidence="1">
        <text>GTP + H2O = GDP + phosphate + H(+)</text>
        <dbReference type="Rhea" id="RHEA:19669"/>
        <dbReference type="ChEBI" id="CHEBI:15377"/>
        <dbReference type="ChEBI" id="CHEBI:15378"/>
        <dbReference type="ChEBI" id="CHEBI:37565"/>
        <dbReference type="ChEBI" id="CHEBI:43474"/>
        <dbReference type="ChEBI" id="CHEBI:58189"/>
        <dbReference type="EC" id="3.6.5.n1"/>
    </reaction>
</comment>
<comment type="subcellular location">
    <subcellularLocation>
        <location evidence="1">Cell membrane</location>
        <topology evidence="1">Peripheral membrane protein</topology>
        <orientation evidence="1">Cytoplasmic side</orientation>
    </subcellularLocation>
</comment>
<comment type="similarity">
    <text evidence="1">Belongs to the TRAFAC class translation factor GTPase superfamily. Classic translation factor GTPase family. LepA subfamily.</text>
</comment>
<keyword id="KW-1003">Cell membrane</keyword>
<keyword id="KW-0342">GTP-binding</keyword>
<keyword id="KW-0378">Hydrolase</keyword>
<keyword id="KW-0472">Membrane</keyword>
<keyword id="KW-0547">Nucleotide-binding</keyword>
<keyword id="KW-0648">Protein biosynthesis</keyword>
<keyword id="KW-1185">Reference proteome</keyword>
<dbReference type="EC" id="3.6.5.n1" evidence="1"/>
<dbReference type="EMBL" id="CP000023">
    <property type="protein sequence ID" value="AAV60577.1"/>
    <property type="molecule type" value="Genomic_DNA"/>
</dbReference>
<dbReference type="RefSeq" id="WP_002950637.1">
    <property type="nucleotide sequence ID" value="NC_006448.1"/>
</dbReference>
<dbReference type="SMR" id="Q5M4M2"/>
<dbReference type="STRING" id="264199.stu0911"/>
<dbReference type="KEGG" id="stl:stu0911"/>
<dbReference type="PATRIC" id="fig|264199.4.peg.905"/>
<dbReference type="eggNOG" id="COG0481">
    <property type="taxonomic scope" value="Bacteria"/>
</dbReference>
<dbReference type="HOGENOM" id="CLU_009995_3_3_9"/>
<dbReference type="Proteomes" id="UP000001170">
    <property type="component" value="Chromosome"/>
</dbReference>
<dbReference type="GO" id="GO:0005886">
    <property type="term" value="C:plasma membrane"/>
    <property type="evidence" value="ECO:0007669"/>
    <property type="project" value="UniProtKB-SubCell"/>
</dbReference>
<dbReference type="GO" id="GO:0005525">
    <property type="term" value="F:GTP binding"/>
    <property type="evidence" value="ECO:0007669"/>
    <property type="project" value="UniProtKB-UniRule"/>
</dbReference>
<dbReference type="GO" id="GO:0003924">
    <property type="term" value="F:GTPase activity"/>
    <property type="evidence" value="ECO:0007669"/>
    <property type="project" value="UniProtKB-UniRule"/>
</dbReference>
<dbReference type="GO" id="GO:0043022">
    <property type="term" value="F:ribosome binding"/>
    <property type="evidence" value="ECO:0007669"/>
    <property type="project" value="UniProtKB-UniRule"/>
</dbReference>
<dbReference type="GO" id="GO:0003746">
    <property type="term" value="F:translation elongation factor activity"/>
    <property type="evidence" value="ECO:0007669"/>
    <property type="project" value="UniProtKB-UniRule"/>
</dbReference>
<dbReference type="GO" id="GO:0045727">
    <property type="term" value="P:positive regulation of translation"/>
    <property type="evidence" value="ECO:0007669"/>
    <property type="project" value="UniProtKB-UniRule"/>
</dbReference>
<dbReference type="CDD" id="cd03699">
    <property type="entry name" value="EF4_II"/>
    <property type="match status" value="1"/>
</dbReference>
<dbReference type="CDD" id="cd16260">
    <property type="entry name" value="EF4_III"/>
    <property type="match status" value="1"/>
</dbReference>
<dbReference type="CDD" id="cd01890">
    <property type="entry name" value="LepA"/>
    <property type="match status" value="1"/>
</dbReference>
<dbReference type="CDD" id="cd03709">
    <property type="entry name" value="lepA_C"/>
    <property type="match status" value="1"/>
</dbReference>
<dbReference type="FunFam" id="3.40.50.300:FF:000078">
    <property type="entry name" value="Elongation factor 4"/>
    <property type="match status" value="1"/>
</dbReference>
<dbReference type="FunFam" id="2.40.30.10:FF:000015">
    <property type="entry name" value="Translation factor GUF1, mitochondrial"/>
    <property type="match status" value="1"/>
</dbReference>
<dbReference type="FunFam" id="3.30.70.240:FF:000007">
    <property type="entry name" value="Translation factor GUF1, mitochondrial"/>
    <property type="match status" value="1"/>
</dbReference>
<dbReference type="FunFam" id="3.30.70.2570:FF:000001">
    <property type="entry name" value="Translation factor GUF1, mitochondrial"/>
    <property type="match status" value="1"/>
</dbReference>
<dbReference type="FunFam" id="3.30.70.870:FF:000004">
    <property type="entry name" value="Translation factor GUF1, mitochondrial"/>
    <property type="match status" value="1"/>
</dbReference>
<dbReference type="Gene3D" id="3.30.70.240">
    <property type="match status" value="1"/>
</dbReference>
<dbReference type="Gene3D" id="3.30.70.2570">
    <property type="entry name" value="Elongation factor 4, C-terminal domain"/>
    <property type="match status" value="1"/>
</dbReference>
<dbReference type="Gene3D" id="3.30.70.870">
    <property type="entry name" value="Elongation Factor G (Translational Gtpase), domain 3"/>
    <property type="match status" value="1"/>
</dbReference>
<dbReference type="Gene3D" id="3.40.50.300">
    <property type="entry name" value="P-loop containing nucleotide triphosphate hydrolases"/>
    <property type="match status" value="1"/>
</dbReference>
<dbReference type="Gene3D" id="2.40.30.10">
    <property type="entry name" value="Translation factors"/>
    <property type="match status" value="1"/>
</dbReference>
<dbReference type="HAMAP" id="MF_00071">
    <property type="entry name" value="LepA"/>
    <property type="match status" value="1"/>
</dbReference>
<dbReference type="InterPro" id="IPR006297">
    <property type="entry name" value="EF-4"/>
</dbReference>
<dbReference type="InterPro" id="IPR035647">
    <property type="entry name" value="EFG_III/V"/>
</dbReference>
<dbReference type="InterPro" id="IPR000640">
    <property type="entry name" value="EFG_V-like"/>
</dbReference>
<dbReference type="InterPro" id="IPR004161">
    <property type="entry name" value="EFTu-like_2"/>
</dbReference>
<dbReference type="InterPro" id="IPR031157">
    <property type="entry name" value="G_TR_CS"/>
</dbReference>
<dbReference type="InterPro" id="IPR038363">
    <property type="entry name" value="LepA_C_sf"/>
</dbReference>
<dbReference type="InterPro" id="IPR013842">
    <property type="entry name" value="LepA_CTD"/>
</dbReference>
<dbReference type="InterPro" id="IPR035654">
    <property type="entry name" value="LepA_IV"/>
</dbReference>
<dbReference type="InterPro" id="IPR027417">
    <property type="entry name" value="P-loop_NTPase"/>
</dbReference>
<dbReference type="InterPro" id="IPR005225">
    <property type="entry name" value="Small_GTP-bd"/>
</dbReference>
<dbReference type="InterPro" id="IPR000795">
    <property type="entry name" value="T_Tr_GTP-bd_dom"/>
</dbReference>
<dbReference type="NCBIfam" id="TIGR01393">
    <property type="entry name" value="lepA"/>
    <property type="match status" value="1"/>
</dbReference>
<dbReference type="NCBIfam" id="TIGR00231">
    <property type="entry name" value="small_GTP"/>
    <property type="match status" value="1"/>
</dbReference>
<dbReference type="PANTHER" id="PTHR43512:SF4">
    <property type="entry name" value="TRANSLATION FACTOR GUF1 HOMOLOG, CHLOROPLASTIC"/>
    <property type="match status" value="1"/>
</dbReference>
<dbReference type="PANTHER" id="PTHR43512">
    <property type="entry name" value="TRANSLATION FACTOR GUF1-RELATED"/>
    <property type="match status" value="1"/>
</dbReference>
<dbReference type="Pfam" id="PF00679">
    <property type="entry name" value="EFG_C"/>
    <property type="match status" value="1"/>
</dbReference>
<dbReference type="Pfam" id="PF00009">
    <property type="entry name" value="GTP_EFTU"/>
    <property type="match status" value="1"/>
</dbReference>
<dbReference type="Pfam" id="PF03144">
    <property type="entry name" value="GTP_EFTU_D2"/>
    <property type="match status" value="1"/>
</dbReference>
<dbReference type="Pfam" id="PF06421">
    <property type="entry name" value="LepA_C"/>
    <property type="match status" value="1"/>
</dbReference>
<dbReference type="PRINTS" id="PR00315">
    <property type="entry name" value="ELONGATNFCT"/>
</dbReference>
<dbReference type="SMART" id="SM00838">
    <property type="entry name" value="EFG_C"/>
    <property type="match status" value="1"/>
</dbReference>
<dbReference type="SUPFAM" id="SSF54980">
    <property type="entry name" value="EF-G C-terminal domain-like"/>
    <property type="match status" value="2"/>
</dbReference>
<dbReference type="SUPFAM" id="SSF52540">
    <property type="entry name" value="P-loop containing nucleoside triphosphate hydrolases"/>
    <property type="match status" value="1"/>
</dbReference>
<dbReference type="PROSITE" id="PS00301">
    <property type="entry name" value="G_TR_1"/>
    <property type="match status" value="1"/>
</dbReference>
<dbReference type="PROSITE" id="PS51722">
    <property type="entry name" value="G_TR_2"/>
    <property type="match status" value="1"/>
</dbReference>
<proteinExistence type="inferred from homology"/>